<feature type="signal peptide" evidence="1">
    <location>
        <begin position="1"/>
        <end position="22"/>
    </location>
</feature>
<feature type="chain" id="PRO_5004194190" description="Leu/Ile/Val-binding protein BraC3" evidence="1">
    <location>
        <begin position="23"/>
        <end position="367"/>
    </location>
</feature>
<protein>
    <recommendedName>
        <fullName evidence="4">Leu/Ile/Val-binding protein BraC3</fullName>
    </recommendedName>
</protein>
<gene>
    <name evidence="3 6" type="primary">braC3</name>
    <name evidence="3 6" type="ordered locus">RL3540</name>
</gene>
<reference evidence="6 7" key="1">
    <citation type="journal article" date="2006" name="Genome Biol.">
        <title>The genome of Rhizobium leguminosarum has recognizable core and accessory components.</title>
        <authorList>
            <person name="Young J.P.W."/>
            <person name="Crossman L.C."/>
            <person name="Johnston A.W.B."/>
            <person name="Thomson N.R."/>
            <person name="Ghazoui Z.F."/>
            <person name="Hull K.H."/>
            <person name="Wexler M."/>
            <person name="Curson A.R.J."/>
            <person name="Todd J.D."/>
            <person name="Poole P.S."/>
            <person name="Mauchline T.H."/>
            <person name="East A.K."/>
            <person name="Quail M.A."/>
            <person name="Churcher C."/>
            <person name="Arrowsmith C."/>
            <person name="Cherevach I."/>
            <person name="Chillingworth T."/>
            <person name="Clarke K."/>
            <person name="Cronin A."/>
            <person name="Davis P."/>
            <person name="Fraser A."/>
            <person name="Hance Z."/>
            <person name="Hauser H."/>
            <person name="Jagels K."/>
            <person name="Moule S."/>
            <person name="Mungall K."/>
            <person name="Norbertczak H."/>
            <person name="Rabbinowitsch E."/>
            <person name="Sanders M."/>
            <person name="Simmonds M."/>
            <person name="Whitehead S."/>
            <person name="Parkhill J."/>
        </authorList>
    </citation>
    <scope>NUCLEOTIDE SEQUENCE [LARGE SCALE GENOMIC DNA]</scope>
    <source>
        <strain evidence="6 7">DSM 114642 / LMG 32736 / 3841</strain>
    </source>
</reference>
<reference key="2">
    <citation type="journal article" date="2009" name="Proc. Natl. Acad. Sci. U.S.A.">
        <title>Legumes regulate Rhizobium bacteroid development and persistence by the supply of branched-chain amino acids.</title>
        <authorList>
            <person name="Prell J."/>
            <person name="White J.P."/>
            <person name="Bourdes A."/>
            <person name="Bunnewell S."/>
            <person name="Bongaerts R.J."/>
            <person name="Poole P.S."/>
        </authorList>
    </citation>
    <scope>FUNCTION</scope>
    <scope>SUBUNIT</scope>
    <scope>DISRUPTION PHENOTYPE</scope>
    <source>
        <strain evidence="3">DSM 114642 / LMG 32736 / 3841</strain>
    </source>
</reference>
<keyword id="KW-0029">Amino-acid transport</keyword>
<keyword id="KW-0574">Periplasm</keyword>
<keyword id="KW-0732">Signal</keyword>
<keyword id="KW-0813">Transport</keyword>
<comment type="function">
    <text evidence="2">Part of the ABC transporter complex BraDEFGC/C3 involved in transport of branched-chain amino acids Leu, Ile and Val (LIV). Essential for the development of bacteroids, the differentiated legume-symbiotic forms of this bacterium, and for the effective N(2) fixation by them.</text>
</comment>
<comment type="subunit">
    <text evidence="5">The complex is composed of two ATP-binding proteins (BraF and BraG), two transmembrane proteins (BraD and BraE) and a solute-binding protein (BraC or BraC3).</text>
</comment>
<comment type="subcellular location">
    <subcellularLocation>
        <location evidence="4">Periplasm</location>
    </subcellularLocation>
</comment>
<comment type="disruption phenotype">
    <text evidence="2">Reduced uptake of amino acids Glu, Asp, Ala, Leu, Ile and Val by bacteroids that lack this gene and the genes aapJ and braC from the two ABC uptake systems of branched-chain amino acids. Pea plants inoculated with the triple mutant bacteroids are defective in symbiosis; the plants are yellow, have increased numbers of small pale pink root nodules, dry weights similar to uninoculated control plants and 30% acetylene reduction compared to plants inoculated with wild-type bacteroids.</text>
</comment>
<comment type="similarity">
    <text evidence="4">Belongs to the leucine-binding protein family.</text>
</comment>
<sequence>MTLKTLTATLVASLAFAPLAHADITIGLIAPLTGPVAAYGDQVKNGAQTAVDEINKKGGILGEKVVLELADDAGEPKQGVSAANKVVGDGIRFVVGPVTSGVAIPVSDVLAENGVLMVTPTATAPDLTKRGLTNVLRTCGRDDQQAEVAAKYVLKNFKDKRVAIVNDKGAYGKGLADAFKATLNAGGITEVVNDAITPGDKDFSALTTRIKSEKVDVVYFGGYHPEGGLLARQLHDLAANATIIGGDGLSNTEFWAIGTDAAGGTIFTNASDATKSPDSKAAADALAAKNIPAEAFTLNAYAAVEVLKAGIEKAGSAEDAEAVATALKDGKEIPTAIGKVTYGETGDLTSQSFSLYKWEAGKIVAAE</sequence>
<name>LIVB3_RHIJ3</name>
<organism evidence="6">
    <name type="scientific">Rhizobium johnstonii (strain DSM 114642 / LMG 32736 / 3841)</name>
    <name type="common">Rhizobium leguminosarum bv. viciae</name>
    <dbReference type="NCBI Taxonomy" id="216596"/>
    <lineage>
        <taxon>Bacteria</taxon>
        <taxon>Pseudomonadati</taxon>
        <taxon>Pseudomonadota</taxon>
        <taxon>Alphaproteobacteria</taxon>
        <taxon>Hyphomicrobiales</taxon>
        <taxon>Rhizobiaceae</taxon>
        <taxon>Rhizobium/Agrobacterium group</taxon>
        <taxon>Rhizobium</taxon>
        <taxon>Rhizobium johnstonii</taxon>
    </lineage>
</organism>
<dbReference type="EMBL" id="AM236080">
    <property type="protein sequence ID" value="CAK09028.1"/>
    <property type="molecule type" value="Genomic_DNA"/>
</dbReference>
<dbReference type="RefSeq" id="WP_011653012.1">
    <property type="nucleotide sequence ID" value="NC_008380.1"/>
</dbReference>
<dbReference type="SMR" id="Q1MDE9"/>
<dbReference type="EnsemblBacteria" id="CAK09028">
    <property type="protein sequence ID" value="CAK09028"/>
    <property type="gene ID" value="RL3540"/>
</dbReference>
<dbReference type="KEGG" id="rle:RL3540"/>
<dbReference type="eggNOG" id="COG0683">
    <property type="taxonomic scope" value="Bacteria"/>
</dbReference>
<dbReference type="HOGENOM" id="CLU_027128_6_0_5"/>
<dbReference type="Proteomes" id="UP000006575">
    <property type="component" value="Chromosome"/>
</dbReference>
<dbReference type="GO" id="GO:0055052">
    <property type="term" value="C:ATP-binding cassette (ABC) transporter complex, substrate-binding subunit-containing"/>
    <property type="evidence" value="ECO:0000315"/>
    <property type="project" value="UniProtKB"/>
</dbReference>
<dbReference type="GO" id="GO:0042597">
    <property type="term" value="C:periplasmic space"/>
    <property type="evidence" value="ECO:0007669"/>
    <property type="project" value="UniProtKB-SubCell"/>
</dbReference>
<dbReference type="GO" id="GO:0043090">
    <property type="term" value="P:amino acid import"/>
    <property type="evidence" value="ECO:0000315"/>
    <property type="project" value="UniProtKB"/>
</dbReference>
<dbReference type="GO" id="GO:0015803">
    <property type="term" value="P:branched-chain amino acid transport"/>
    <property type="evidence" value="ECO:0000315"/>
    <property type="project" value="UniProtKB"/>
</dbReference>
<dbReference type="GO" id="GO:0015818">
    <property type="term" value="P:isoleucine transport"/>
    <property type="evidence" value="ECO:0000315"/>
    <property type="project" value="UniProtKB"/>
</dbReference>
<dbReference type="GO" id="GO:0015820">
    <property type="term" value="P:L-leucine transport"/>
    <property type="evidence" value="ECO:0000315"/>
    <property type="project" value="UniProtKB"/>
</dbReference>
<dbReference type="GO" id="GO:0015829">
    <property type="term" value="P:valine transport"/>
    <property type="evidence" value="ECO:0000315"/>
    <property type="project" value="UniProtKB"/>
</dbReference>
<dbReference type="CDD" id="cd06342">
    <property type="entry name" value="PBP1_ABC_LIVBP-like"/>
    <property type="match status" value="1"/>
</dbReference>
<dbReference type="Gene3D" id="3.40.50.2300">
    <property type="match status" value="2"/>
</dbReference>
<dbReference type="InterPro" id="IPR028081">
    <property type="entry name" value="Leu-bd"/>
</dbReference>
<dbReference type="InterPro" id="IPR000709">
    <property type="entry name" value="Leu_Ile_Val-bd"/>
</dbReference>
<dbReference type="InterPro" id="IPR028082">
    <property type="entry name" value="Peripla_BP_I"/>
</dbReference>
<dbReference type="PANTHER" id="PTHR47151:SF2">
    <property type="entry name" value="AMINO ACID BINDING PROTEIN"/>
    <property type="match status" value="1"/>
</dbReference>
<dbReference type="PANTHER" id="PTHR47151">
    <property type="entry name" value="LEU/ILE/VAL-BINDING ABC TRANSPORTER SUBUNIT"/>
    <property type="match status" value="1"/>
</dbReference>
<dbReference type="Pfam" id="PF13458">
    <property type="entry name" value="Peripla_BP_6"/>
    <property type="match status" value="1"/>
</dbReference>
<dbReference type="PRINTS" id="PR00337">
    <property type="entry name" value="LEUILEVALBP"/>
</dbReference>
<dbReference type="SUPFAM" id="SSF53822">
    <property type="entry name" value="Periplasmic binding protein-like I"/>
    <property type="match status" value="1"/>
</dbReference>
<accession>Q1MDE9</accession>
<proteinExistence type="evidence at protein level"/>
<evidence type="ECO:0000255" key="1"/>
<evidence type="ECO:0000269" key="2">
    <source>
    </source>
</evidence>
<evidence type="ECO:0000303" key="3">
    <source>
    </source>
</evidence>
<evidence type="ECO:0000305" key="4"/>
<evidence type="ECO:0000305" key="5">
    <source>
    </source>
</evidence>
<evidence type="ECO:0000312" key="6">
    <source>
        <dbReference type="EMBL" id="CAK09028.1"/>
    </source>
</evidence>
<evidence type="ECO:0000312" key="7">
    <source>
        <dbReference type="Proteomes" id="UP000006575"/>
    </source>
</evidence>